<proteinExistence type="inferred from homology"/>
<gene>
    <name type="primary">VSTM5</name>
    <name type="synonym">C11orf90</name>
</gene>
<reference key="1">
    <citation type="journal article" date="2006" name="Nature">
        <title>Human chromosome 11 DNA sequence and analysis including novel gene identification.</title>
        <authorList>
            <person name="Taylor T.D."/>
            <person name="Noguchi H."/>
            <person name="Totoki Y."/>
            <person name="Toyoda A."/>
            <person name="Kuroki Y."/>
            <person name="Dewar K."/>
            <person name="Lloyd C."/>
            <person name="Itoh T."/>
            <person name="Takeda T."/>
            <person name="Kim D.-W."/>
            <person name="She X."/>
            <person name="Barlow K.F."/>
            <person name="Bloom T."/>
            <person name="Bruford E."/>
            <person name="Chang J.L."/>
            <person name="Cuomo C.A."/>
            <person name="Eichler E."/>
            <person name="FitzGerald M.G."/>
            <person name="Jaffe D.B."/>
            <person name="LaButti K."/>
            <person name="Nicol R."/>
            <person name="Park H.-S."/>
            <person name="Seaman C."/>
            <person name="Sougnez C."/>
            <person name="Yang X."/>
            <person name="Zimmer A.R."/>
            <person name="Zody M.C."/>
            <person name="Birren B.W."/>
            <person name="Nusbaum C."/>
            <person name="Fujiyama A."/>
            <person name="Hattori M."/>
            <person name="Rogers J."/>
            <person name="Lander E.S."/>
            <person name="Sakaki Y."/>
        </authorList>
    </citation>
    <scope>NUCLEOTIDE SEQUENCE [LARGE SCALE GENOMIC DNA]</scope>
</reference>
<reference key="2">
    <citation type="submission" date="2005-07" db="EMBL/GenBank/DDBJ databases">
        <authorList>
            <person name="Mural R.J."/>
            <person name="Istrail S."/>
            <person name="Sutton G.G."/>
            <person name="Florea L."/>
            <person name="Halpern A.L."/>
            <person name="Mobarry C.M."/>
            <person name="Lippert R."/>
            <person name="Walenz B."/>
            <person name="Shatkay H."/>
            <person name="Dew I."/>
            <person name="Miller J.R."/>
            <person name="Flanigan M.J."/>
            <person name="Edwards N.J."/>
            <person name="Bolanos R."/>
            <person name="Fasulo D."/>
            <person name="Halldorsson B.V."/>
            <person name="Hannenhalli S."/>
            <person name="Turner R."/>
            <person name="Yooseph S."/>
            <person name="Lu F."/>
            <person name="Nusskern D.R."/>
            <person name="Shue B.C."/>
            <person name="Zheng X.H."/>
            <person name="Zhong F."/>
            <person name="Delcher A.L."/>
            <person name="Huson D.H."/>
            <person name="Kravitz S.A."/>
            <person name="Mouchard L."/>
            <person name="Reinert K."/>
            <person name="Remington K.A."/>
            <person name="Clark A.G."/>
            <person name="Waterman M.S."/>
            <person name="Eichler E.E."/>
            <person name="Adams M.D."/>
            <person name="Hunkapiller M.W."/>
            <person name="Myers E.W."/>
            <person name="Venter J.C."/>
        </authorList>
    </citation>
    <scope>NUCLEOTIDE SEQUENCE [LARGE SCALE GENOMIC DNA]</scope>
</reference>
<dbReference type="EMBL" id="AP001894">
    <property type="status" value="NOT_ANNOTATED_CDS"/>
    <property type="molecule type" value="Genomic_DNA"/>
</dbReference>
<dbReference type="EMBL" id="CH471065">
    <property type="protein sequence ID" value="EAW66922.1"/>
    <property type="molecule type" value="Genomic_DNA"/>
</dbReference>
<dbReference type="CCDS" id="CCDS44709.1"/>
<dbReference type="RefSeq" id="NP_001138343.1">
    <property type="nucleotide sequence ID" value="NM_001144871.2"/>
</dbReference>
<dbReference type="FunCoup" id="A8MXK1">
    <property type="interactions" value="166"/>
</dbReference>
<dbReference type="STRING" id="9606.ENSP00000386607"/>
<dbReference type="GlyCosmos" id="A8MXK1">
    <property type="glycosylation" value="1 site, No reported glycans"/>
</dbReference>
<dbReference type="GlyGen" id="A8MXK1">
    <property type="glycosylation" value="1 site"/>
</dbReference>
<dbReference type="iPTMnet" id="A8MXK1"/>
<dbReference type="PhosphoSitePlus" id="A8MXK1"/>
<dbReference type="BioMuta" id="VSTM5"/>
<dbReference type="PaxDb" id="9606-ENSP00000386607"/>
<dbReference type="PeptideAtlas" id="A8MXK1"/>
<dbReference type="Antibodypedia" id="31599">
    <property type="antibodies" value="31 antibodies from 11 providers"/>
</dbReference>
<dbReference type="DNASU" id="387804"/>
<dbReference type="Ensembl" id="ENST00000409977.2">
    <property type="protein sequence ID" value="ENSP00000386607.1"/>
    <property type="gene ID" value="ENSG00000214376.6"/>
</dbReference>
<dbReference type="GeneID" id="387804"/>
<dbReference type="KEGG" id="hsa:387804"/>
<dbReference type="MANE-Select" id="ENST00000409977.2">
    <property type="protein sequence ID" value="ENSP00000386607.1"/>
    <property type="RefSeq nucleotide sequence ID" value="NM_001144871.2"/>
    <property type="RefSeq protein sequence ID" value="NP_001138343.1"/>
</dbReference>
<dbReference type="UCSC" id="uc010ruc.2">
    <property type="organism name" value="human"/>
</dbReference>
<dbReference type="AGR" id="HGNC:34443"/>
<dbReference type="CTD" id="387804"/>
<dbReference type="GeneCards" id="VSTM5"/>
<dbReference type="HGNC" id="HGNC:34443">
    <property type="gene designation" value="VSTM5"/>
</dbReference>
<dbReference type="HPA" id="ENSG00000214376">
    <property type="expression patterns" value="Tissue enhanced (brain, placenta)"/>
</dbReference>
<dbReference type="neXtProt" id="NX_A8MXK1"/>
<dbReference type="OpenTargets" id="ENSG00000214376"/>
<dbReference type="PharmGKB" id="PA164716741"/>
<dbReference type="VEuPathDB" id="HostDB:ENSG00000214376"/>
<dbReference type="eggNOG" id="ENOG502S0GW">
    <property type="taxonomic scope" value="Eukaryota"/>
</dbReference>
<dbReference type="GeneTree" id="ENSGT01130000278319"/>
<dbReference type="HOGENOM" id="CLU_118644_0_0_1"/>
<dbReference type="InParanoid" id="A8MXK1"/>
<dbReference type="OMA" id="KIVEWQP"/>
<dbReference type="OrthoDB" id="9933251at2759"/>
<dbReference type="PAN-GO" id="A8MXK1">
    <property type="GO annotations" value="6 GO annotations based on evolutionary models"/>
</dbReference>
<dbReference type="PhylomeDB" id="A8MXK1"/>
<dbReference type="TreeFam" id="TF332950"/>
<dbReference type="PathwayCommons" id="A8MXK1"/>
<dbReference type="SignaLink" id="A8MXK1"/>
<dbReference type="BioGRID-ORCS" id="387804">
    <property type="hits" value="20 hits in 1139 CRISPR screens"/>
</dbReference>
<dbReference type="GenomeRNAi" id="387804"/>
<dbReference type="Pharos" id="A8MXK1">
    <property type="development level" value="Tdark"/>
</dbReference>
<dbReference type="PRO" id="PR:A8MXK1"/>
<dbReference type="Proteomes" id="UP000005640">
    <property type="component" value="Chromosome 11"/>
</dbReference>
<dbReference type="RNAct" id="A8MXK1">
    <property type="molecule type" value="protein"/>
</dbReference>
<dbReference type="Bgee" id="ENSG00000214376">
    <property type="expression patterns" value="Expressed in male germ line stem cell (sensu Vertebrata) in testis and 95 other cell types or tissues"/>
</dbReference>
<dbReference type="ExpressionAtlas" id="A8MXK1">
    <property type="expression patterns" value="baseline and differential"/>
</dbReference>
<dbReference type="GO" id="GO:0030424">
    <property type="term" value="C:axon"/>
    <property type="evidence" value="ECO:0000250"/>
    <property type="project" value="UniProtKB"/>
</dbReference>
<dbReference type="GO" id="GO:0030425">
    <property type="term" value="C:dendrite"/>
    <property type="evidence" value="ECO:0000250"/>
    <property type="project" value="UniProtKB"/>
</dbReference>
<dbReference type="GO" id="GO:0016020">
    <property type="term" value="C:membrane"/>
    <property type="evidence" value="ECO:0000250"/>
    <property type="project" value="UniProtKB"/>
</dbReference>
<dbReference type="GO" id="GO:0005886">
    <property type="term" value="C:plasma membrane"/>
    <property type="evidence" value="ECO:0000250"/>
    <property type="project" value="UniProtKB"/>
</dbReference>
<dbReference type="GO" id="GO:0046847">
    <property type="term" value="P:filopodium assembly"/>
    <property type="evidence" value="ECO:0000250"/>
    <property type="project" value="UniProtKB"/>
</dbReference>
<dbReference type="GO" id="GO:0006955">
    <property type="term" value="P:immune response"/>
    <property type="evidence" value="ECO:0000318"/>
    <property type="project" value="GO_Central"/>
</dbReference>
<dbReference type="GO" id="GO:1904891">
    <property type="term" value="P:positive regulation of excitatory synapse assembly"/>
    <property type="evidence" value="ECO:0000250"/>
    <property type="project" value="UniProtKB"/>
</dbReference>
<dbReference type="GO" id="GO:0051260">
    <property type="term" value="P:protein homooligomerization"/>
    <property type="evidence" value="ECO:0000250"/>
    <property type="project" value="UniProtKB"/>
</dbReference>
<dbReference type="GO" id="GO:0021517">
    <property type="term" value="P:ventral spinal cord development"/>
    <property type="evidence" value="ECO:0007669"/>
    <property type="project" value="Ensembl"/>
</dbReference>
<dbReference type="FunFam" id="2.60.40.10:FF:001595">
    <property type="entry name" value="V-set and transmembrane domain containing 5"/>
    <property type="match status" value="1"/>
</dbReference>
<dbReference type="Gene3D" id="2.60.40.10">
    <property type="entry name" value="Immunoglobulins"/>
    <property type="match status" value="1"/>
</dbReference>
<dbReference type="InterPro" id="IPR015631">
    <property type="entry name" value="CD2/SLAM_rcpt"/>
</dbReference>
<dbReference type="InterPro" id="IPR036179">
    <property type="entry name" value="Ig-like_dom_sf"/>
</dbReference>
<dbReference type="InterPro" id="IPR013783">
    <property type="entry name" value="Ig-like_fold"/>
</dbReference>
<dbReference type="InterPro" id="IPR003599">
    <property type="entry name" value="Ig_sub"/>
</dbReference>
<dbReference type="PANTHER" id="PTHR12080">
    <property type="entry name" value="SIGNALING LYMPHOCYTIC ACTIVATION MOLECULE"/>
    <property type="match status" value="1"/>
</dbReference>
<dbReference type="PANTHER" id="PTHR12080:SF93">
    <property type="entry name" value="V-SET AND TRANSMEMBRANE DOMAIN-CONTAINING PROTEIN 5"/>
    <property type="match status" value="1"/>
</dbReference>
<dbReference type="SMART" id="SM00409">
    <property type="entry name" value="IG"/>
    <property type="match status" value="1"/>
</dbReference>
<dbReference type="SUPFAM" id="SSF48726">
    <property type="entry name" value="Immunoglobulin"/>
    <property type="match status" value="1"/>
</dbReference>
<sequence length="200" mass="22377">MRPLPSGRRKTRGISLGLFALCLAAARCLQSQGVSLYIPQATINATVKEDILLSVEYSCHGVPTIEWTYSSNWGTQKIVEWKPGTQANISQSHKDRVCTFDNGSIQLFSVGVRDSGYYVITVTERLGSSQFGTIVLHVSEILYEDLHFVAVILAFLAAVAAVLISLMWVCNKCAYKFQRKRRHKLKESTTEEIELEDVEC</sequence>
<feature type="signal peptide" evidence="2">
    <location>
        <begin position="1"/>
        <end position="28"/>
    </location>
</feature>
<feature type="chain" id="PRO_0000340693" description="V-set and transmembrane domain-containing protein 5">
    <location>
        <begin position="29"/>
        <end position="200"/>
    </location>
</feature>
<feature type="topological domain" description="Extracellular" evidence="2">
    <location>
        <begin position="29"/>
        <end position="147"/>
    </location>
</feature>
<feature type="transmembrane region" description="Helical" evidence="2">
    <location>
        <begin position="148"/>
        <end position="168"/>
    </location>
</feature>
<feature type="topological domain" description="Cytoplasmic" evidence="2">
    <location>
        <begin position="169"/>
        <end position="200"/>
    </location>
</feature>
<feature type="domain" description="Ig-like C2-type">
    <location>
        <begin position="37"/>
        <end position="139"/>
    </location>
</feature>
<feature type="region of interest" description="Important for CDC42-dependent filopodia induction" evidence="1">
    <location>
        <begin position="170"/>
        <end position="186"/>
    </location>
</feature>
<feature type="glycosylation site" description="N-linked (GlcNAc...) asparagine" evidence="2">
    <location>
        <position position="102"/>
    </location>
</feature>
<accession>A8MXK1</accession>
<comment type="function">
    <text evidence="1">Cell adhesion-like membrane protein of the central nervous system (CNS) which modulates both the position and complexity of central neurons by altering their membrane morphology and dynamics. Involved in the formation of neuronal dendrites and protrusions including dendritic filopodia. In synaptogenesis, regulates synapse formation by altering dendritic spine morphology and actin distribution. Promotes formation of unstable neuronal spines such as thin and branched types. Regulates neuronal morphogenesis and migration during cortical development in the brain.</text>
</comment>
<comment type="subunit">
    <text evidence="1">Can homooligomerize through cis interactions within the same cell membrane.</text>
</comment>
<comment type="subcellular location">
    <subcellularLocation>
        <location evidence="1">Cell membrane</location>
        <topology evidence="3">Single-pass type I membrane protein</topology>
    </subcellularLocation>
    <subcellularLocation>
        <location evidence="1">Cell projection</location>
        <location evidence="1">Dendrite</location>
    </subcellularLocation>
    <subcellularLocation>
        <location evidence="1">Cell projection</location>
        <location evidence="1">Axon</location>
    </subcellularLocation>
</comment>
<comment type="PTM">
    <text evidence="1">N-glycosylated.</text>
</comment>
<protein>
    <recommendedName>
        <fullName>V-set and transmembrane domain-containing protein 5</fullName>
    </recommendedName>
</protein>
<evidence type="ECO:0000250" key="1">
    <source>
        <dbReference type="UniProtKB" id="Q9D806"/>
    </source>
</evidence>
<evidence type="ECO:0000255" key="2"/>
<evidence type="ECO:0000305" key="3"/>
<organism>
    <name type="scientific">Homo sapiens</name>
    <name type="common">Human</name>
    <dbReference type="NCBI Taxonomy" id="9606"/>
    <lineage>
        <taxon>Eukaryota</taxon>
        <taxon>Metazoa</taxon>
        <taxon>Chordata</taxon>
        <taxon>Craniata</taxon>
        <taxon>Vertebrata</taxon>
        <taxon>Euteleostomi</taxon>
        <taxon>Mammalia</taxon>
        <taxon>Eutheria</taxon>
        <taxon>Euarchontoglires</taxon>
        <taxon>Primates</taxon>
        <taxon>Haplorrhini</taxon>
        <taxon>Catarrhini</taxon>
        <taxon>Hominidae</taxon>
        <taxon>Homo</taxon>
    </lineage>
</organism>
<name>VSTM5_HUMAN</name>
<keyword id="KW-1003">Cell membrane</keyword>
<keyword id="KW-0966">Cell projection</keyword>
<keyword id="KW-0217">Developmental protein</keyword>
<keyword id="KW-0325">Glycoprotein</keyword>
<keyword id="KW-0472">Membrane</keyword>
<keyword id="KW-1185">Reference proteome</keyword>
<keyword id="KW-0732">Signal</keyword>
<keyword id="KW-0812">Transmembrane</keyword>
<keyword id="KW-1133">Transmembrane helix</keyword>